<accession>A3D499</accession>
<dbReference type="EC" id="2.1.1.222" evidence="1"/>
<dbReference type="EC" id="2.1.1.64" evidence="1"/>
<dbReference type="EMBL" id="CP000563">
    <property type="protein sequence ID" value="ABN61562.1"/>
    <property type="molecule type" value="Genomic_DNA"/>
</dbReference>
<dbReference type="RefSeq" id="WP_006086768.1">
    <property type="nucleotide sequence ID" value="NC_009052.1"/>
</dbReference>
<dbReference type="SMR" id="A3D499"/>
<dbReference type="STRING" id="325240.Sbal_2061"/>
<dbReference type="GeneID" id="11774793"/>
<dbReference type="KEGG" id="sbl:Sbal_2061"/>
<dbReference type="HOGENOM" id="CLU_042432_5_0_6"/>
<dbReference type="OrthoDB" id="9801538at2"/>
<dbReference type="UniPathway" id="UPA00232"/>
<dbReference type="Proteomes" id="UP000001557">
    <property type="component" value="Chromosome"/>
</dbReference>
<dbReference type="GO" id="GO:0102208">
    <property type="term" value="F:2-polyprenyl-6-hydroxyphenol methylase activity"/>
    <property type="evidence" value="ECO:0007669"/>
    <property type="project" value="UniProtKB-EC"/>
</dbReference>
<dbReference type="GO" id="GO:0061542">
    <property type="term" value="F:3-demethylubiquinol 3-O-methyltransferase activity"/>
    <property type="evidence" value="ECO:0007669"/>
    <property type="project" value="UniProtKB-UniRule"/>
</dbReference>
<dbReference type="GO" id="GO:0010420">
    <property type="term" value="F:polyprenyldihydroxybenzoate methyltransferase activity"/>
    <property type="evidence" value="ECO:0007669"/>
    <property type="project" value="InterPro"/>
</dbReference>
<dbReference type="GO" id="GO:0032259">
    <property type="term" value="P:methylation"/>
    <property type="evidence" value="ECO:0007669"/>
    <property type="project" value="UniProtKB-KW"/>
</dbReference>
<dbReference type="CDD" id="cd02440">
    <property type="entry name" value="AdoMet_MTases"/>
    <property type="match status" value="1"/>
</dbReference>
<dbReference type="FunFam" id="3.40.50.150:FF:000028">
    <property type="entry name" value="Ubiquinone biosynthesis O-methyltransferase"/>
    <property type="match status" value="1"/>
</dbReference>
<dbReference type="Gene3D" id="3.40.50.150">
    <property type="entry name" value="Vaccinia Virus protein VP39"/>
    <property type="match status" value="1"/>
</dbReference>
<dbReference type="HAMAP" id="MF_00472">
    <property type="entry name" value="UbiG"/>
    <property type="match status" value="1"/>
</dbReference>
<dbReference type="InterPro" id="IPR029063">
    <property type="entry name" value="SAM-dependent_MTases_sf"/>
</dbReference>
<dbReference type="InterPro" id="IPR010233">
    <property type="entry name" value="UbiG_MeTrfase"/>
</dbReference>
<dbReference type="NCBIfam" id="TIGR01983">
    <property type="entry name" value="UbiG"/>
    <property type="match status" value="1"/>
</dbReference>
<dbReference type="PANTHER" id="PTHR43464">
    <property type="entry name" value="METHYLTRANSFERASE"/>
    <property type="match status" value="1"/>
</dbReference>
<dbReference type="PANTHER" id="PTHR43464:SF19">
    <property type="entry name" value="UBIQUINONE BIOSYNTHESIS O-METHYLTRANSFERASE, MITOCHONDRIAL"/>
    <property type="match status" value="1"/>
</dbReference>
<dbReference type="Pfam" id="PF13489">
    <property type="entry name" value="Methyltransf_23"/>
    <property type="match status" value="1"/>
</dbReference>
<dbReference type="SUPFAM" id="SSF53335">
    <property type="entry name" value="S-adenosyl-L-methionine-dependent methyltransferases"/>
    <property type="match status" value="1"/>
</dbReference>
<proteinExistence type="inferred from homology"/>
<protein>
    <recommendedName>
        <fullName evidence="1">Ubiquinone biosynthesis O-methyltransferase</fullName>
    </recommendedName>
    <alternativeName>
        <fullName evidence="1">2-polyprenyl-6-hydroxyphenol methylase</fullName>
        <ecNumber evidence="1">2.1.1.222</ecNumber>
    </alternativeName>
    <alternativeName>
        <fullName evidence="1">3-demethylubiquinone 3-O-methyltransferase</fullName>
        <ecNumber evidence="1">2.1.1.64</ecNumber>
    </alternativeName>
</protein>
<name>UBIG_SHEB5</name>
<gene>
    <name evidence="1" type="primary">ubiG</name>
    <name type="ordered locus">Sbal_2061</name>
</gene>
<feature type="chain" id="PRO_1000013921" description="Ubiquinone biosynthesis O-methyltransferase">
    <location>
        <begin position="1"/>
        <end position="236"/>
    </location>
</feature>
<feature type="binding site" evidence="1">
    <location>
        <position position="39"/>
    </location>
    <ligand>
        <name>S-adenosyl-L-methionine</name>
        <dbReference type="ChEBI" id="CHEBI:59789"/>
    </ligand>
</feature>
<feature type="binding site" evidence="1">
    <location>
        <position position="59"/>
    </location>
    <ligand>
        <name>S-adenosyl-L-methionine</name>
        <dbReference type="ChEBI" id="CHEBI:59789"/>
    </ligand>
</feature>
<feature type="binding site" evidence="1">
    <location>
        <position position="80"/>
    </location>
    <ligand>
        <name>S-adenosyl-L-methionine</name>
        <dbReference type="ChEBI" id="CHEBI:59789"/>
    </ligand>
</feature>
<feature type="binding site" evidence="1">
    <location>
        <position position="124"/>
    </location>
    <ligand>
        <name>S-adenosyl-L-methionine</name>
        <dbReference type="ChEBI" id="CHEBI:59789"/>
    </ligand>
</feature>
<keyword id="KW-0489">Methyltransferase</keyword>
<keyword id="KW-1185">Reference proteome</keyword>
<keyword id="KW-0949">S-adenosyl-L-methionine</keyword>
<keyword id="KW-0808">Transferase</keyword>
<keyword id="KW-0831">Ubiquinone biosynthesis</keyword>
<organism>
    <name type="scientific">Shewanella baltica (strain OS155 / ATCC BAA-1091)</name>
    <dbReference type="NCBI Taxonomy" id="325240"/>
    <lineage>
        <taxon>Bacteria</taxon>
        <taxon>Pseudomonadati</taxon>
        <taxon>Pseudomonadota</taxon>
        <taxon>Gammaproteobacteria</taxon>
        <taxon>Alteromonadales</taxon>
        <taxon>Shewanellaceae</taxon>
        <taxon>Shewanella</taxon>
    </lineage>
</organism>
<reference key="1">
    <citation type="submission" date="2007-02" db="EMBL/GenBank/DDBJ databases">
        <title>Complete sequence of chromosome of Shewanella baltica OS155.</title>
        <authorList>
            <consortium name="US DOE Joint Genome Institute"/>
            <person name="Copeland A."/>
            <person name="Lucas S."/>
            <person name="Lapidus A."/>
            <person name="Barry K."/>
            <person name="Detter J.C."/>
            <person name="Glavina del Rio T."/>
            <person name="Hammon N."/>
            <person name="Israni S."/>
            <person name="Dalin E."/>
            <person name="Tice H."/>
            <person name="Pitluck S."/>
            <person name="Sims D.R."/>
            <person name="Brettin T."/>
            <person name="Bruce D."/>
            <person name="Han C."/>
            <person name="Tapia R."/>
            <person name="Brainard J."/>
            <person name="Schmutz J."/>
            <person name="Larimer F."/>
            <person name="Land M."/>
            <person name="Hauser L."/>
            <person name="Kyrpides N."/>
            <person name="Mikhailova N."/>
            <person name="Brettar I."/>
            <person name="Klappenbach J."/>
            <person name="Konstantinidis K."/>
            <person name="Rodrigues J."/>
            <person name="Tiedje J."/>
            <person name="Richardson P."/>
        </authorList>
    </citation>
    <scope>NUCLEOTIDE SEQUENCE [LARGE SCALE GENOMIC DNA]</scope>
    <source>
        <strain>OS155 / ATCC BAA-1091</strain>
    </source>
</reference>
<sequence>MHQNTNVDPQEIAKFERMAETWWDLNGEFKPLHLLNPLRLNYIDQTAGGIFGKKVLDVGCGGGILSESMARIGAEVDGLDMGDEPLEVARLHALETGVSINYVKNTAETHSQDHQAYYDVVTCMEMLEHVPDPQSVIKACCDMVKPGGFVFFSTINRNIKSYVHTILGAEYLLKMLPVGTHEHKKFIKPSELIELVDNTDLICTDALGISYNPLTGIFKYTPKVDVNYMIATRKVD</sequence>
<evidence type="ECO:0000255" key="1">
    <source>
        <dbReference type="HAMAP-Rule" id="MF_00472"/>
    </source>
</evidence>
<comment type="function">
    <text evidence="1">O-methyltransferase that catalyzes the 2 O-methylation steps in the ubiquinone biosynthetic pathway.</text>
</comment>
<comment type="catalytic activity">
    <reaction evidence="1">
        <text>a 3-demethylubiquinol + S-adenosyl-L-methionine = a ubiquinol + S-adenosyl-L-homocysteine + H(+)</text>
        <dbReference type="Rhea" id="RHEA:44380"/>
        <dbReference type="Rhea" id="RHEA-COMP:9566"/>
        <dbReference type="Rhea" id="RHEA-COMP:10914"/>
        <dbReference type="ChEBI" id="CHEBI:15378"/>
        <dbReference type="ChEBI" id="CHEBI:17976"/>
        <dbReference type="ChEBI" id="CHEBI:57856"/>
        <dbReference type="ChEBI" id="CHEBI:59789"/>
        <dbReference type="ChEBI" id="CHEBI:84422"/>
        <dbReference type="EC" id="2.1.1.64"/>
    </reaction>
</comment>
<comment type="catalytic activity">
    <reaction evidence="1">
        <text>a 3-(all-trans-polyprenyl)benzene-1,2-diol + S-adenosyl-L-methionine = a 2-methoxy-6-(all-trans-polyprenyl)phenol + S-adenosyl-L-homocysteine + H(+)</text>
        <dbReference type="Rhea" id="RHEA:31411"/>
        <dbReference type="Rhea" id="RHEA-COMP:9550"/>
        <dbReference type="Rhea" id="RHEA-COMP:9551"/>
        <dbReference type="ChEBI" id="CHEBI:15378"/>
        <dbReference type="ChEBI" id="CHEBI:57856"/>
        <dbReference type="ChEBI" id="CHEBI:59789"/>
        <dbReference type="ChEBI" id="CHEBI:62729"/>
        <dbReference type="ChEBI" id="CHEBI:62731"/>
        <dbReference type="EC" id="2.1.1.222"/>
    </reaction>
</comment>
<comment type="pathway">
    <text evidence="1">Cofactor biosynthesis; ubiquinone biosynthesis.</text>
</comment>
<comment type="similarity">
    <text evidence="1">Belongs to the methyltransferase superfamily. UbiG/COQ3 family.</text>
</comment>